<sequence length="250" mass="27077">MSSDTKKPLPYQRILLKLSGEALMGEGKYGIHPPTLMGIAEEVIELAQAGVEVALVIGGGNIFRGVAGATEGMDRASADYMGMLATCINSMAMQDALEKKGLHTRVLSAIKMEQIAEPYIRRRAVRHLEKGRVVIFAAGTGNPYFTTDTAASLRAMEINAQVILKATKVDGVYSADPKKDPTARRYRSLTYMDVLKQNLNVMDSTAISLCMDNKLPIIVFDLTQRGNIRRAVLGEGDIGTLVGGSETVWA</sequence>
<dbReference type="EC" id="2.7.4.22" evidence="1"/>
<dbReference type="EMBL" id="CP000113">
    <property type="protein sequence ID" value="ABF91626.1"/>
    <property type="molecule type" value="Genomic_DNA"/>
</dbReference>
<dbReference type="RefSeq" id="WP_011555307.1">
    <property type="nucleotide sequence ID" value="NC_008095.1"/>
</dbReference>
<dbReference type="SMR" id="Q1D1I1"/>
<dbReference type="STRING" id="246197.MXAN_5342"/>
<dbReference type="EnsemblBacteria" id="ABF91626">
    <property type="protein sequence ID" value="ABF91626"/>
    <property type="gene ID" value="MXAN_5342"/>
</dbReference>
<dbReference type="GeneID" id="41362611"/>
<dbReference type="KEGG" id="mxa:MXAN_5342"/>
<dbReference type="eggNOG" id="COG0528">
    <property type="taxonomic scope" value="Bacteria"/>
</dbReference>
<dbReference type="HOGENOM" id="CLU_033861_0_0_7"/>
<dbReference type="OrthoDB" id="9807458at2"/>
<dbReference type="UniPathway" id="UPA00159">
    <property type="reaction ID" value="UER00275"/>
</dbReference>
<dbReference type="Proteomes" id="UP000002402">
    <property type="component" value="Chromosome"/>
</dbReference>
<dbReference type="GO" id="GO:0005829">
    <property type="term" value="C:cytosol"/>
    <property type="evidence" value="ECO:0007669"/>
    <property type="project" value="TreeGrafter"/>
</dbReference>
<dbReference type="GO" id="GO:0005524">
    <property type="term" value="F:ATP binding"/>
    <property type="evidence" value="ECO:0007669"/>
    <property type="project" value="UniProtKB-KW"/>
</dbReference>
<dbReference type="GO" id="GO:0033862">
    <property type="term" value="F:UMP kinase activity"/>
    <property type="evidence" value="ECO:0007669"/>
    <property type="project" value="UniProtKB-EC"/>
</dbReference>
<dbReference type="GO" id="GO:0044210">
    <property type="term" value="P:'de novo' CTP biosynthetic process"/>
    <property type="evidence" value="ECO:0007669"/>
    <property type="project" value="UniProtKB-UniRule"/>
</dbReference>
<dbReference type="GO" id="GO:0006225">
    <property type="term" value="P:UDP biosynthetic process"/>
    <property type="evidence" value="ECO:0007669"/>
    <property type="project" value="TreeGrafter"/>
</dbReference>
<dbReference type="CDD" id="cd04254">
    <property type="entry name" value="AAK_UMPK-PyrH-Ec"/>
    <property type="match status" value="1"/>
</dbReference>
<dbReference type="FunFam" id="3.40.1160.10:FF:000001">
    <property type="entry name" value="Uridylate kinase"/>
    <property type="match status" value="1"/>
</dbReference>
<dbReference type="Gene3D" id="3.40.1160.10">
    <property type="entry name" value="Acetylglutamate kinase-like"/>
    <property type="match status" value="1"/>
</dbReference>
<dbReference type="HAMAP" id="MF_01220_B">
    <property type="entry name" value="PyrH_B"/>
    <property type="match status" value="1"/>
</dbReference>
<dbReference type="InterPro" id="IPR036393">
    <property type="entry name" value="AceGlu_kinase-like_sf"/>
</dbReference>
<dbReference type="InterPro" id="IPR001048">
    <property type="entry name" value="Asp/Glu/Uridylate_kinase"/>
</dbReference>
<dbReference type="InterPro" id="IPR011817">
    <property type="entry name" value="Uridylate_kinase"/>
</dbReference>
<dbReference type="InterPro" id="IPR015963">
    <property type="entry name" value="Uridylate_kinase_bac"/>
</dbReference>
<dbReference type="NCBIfam" id="TIGR02075">
    <property type="entry name" value="pyrH_bact"/>
    <property type="match status" value="1"/>
</dbReference>
<dbReference type="PANTHER" id="PTHR42833">
    <property type="entry name" value="URIDYLATE KINASE"/>
    <property type="match status" value="1"/>
</dbReference>
<dbReference type="PANTHER" id="PTHR42833:SF4">
    <property type="entry name" value="URIDYLATE KINASE PUMPKIN, CHLOROPLASTIC"/>
    <property type="match status" value="1"/>
</dbReference>
<dbReference type="Pfam" id="PF00696">
    <property type="entry name" value="AA_kinase"/>
    <property type="match status" value="1"/>
</dbReference>
<dbReference type="PIRSF" id="PIRSF005650">
    <property type="entry name" value="Uridylate_kin"/>
    <property type="match status" value="1"/>
</dbReference>
<dbReference type="SUPFAM" id="SSF53633">
    <property type="entry name" value="Carbamate kinase-like"/>
    <property type="match status" value="1"/>
</dbReference>
<organism>
    <name type="scientific">Myxococcus xanthus (strain DK1622)</name>
    <dbReference type="NCBI Taxonomy" id="246197"/>
    <lineage>
        <taxon>Bacteria</taxon>
        <taxon>Pseudomonadati</taxon>
        <taxon>Myxococcota</taxon>
        <taxon>Myxococcia</taxon>
        <taxon>Myxococcales</taxon>
        <taxon>Cystobacterineae</taxon>
        <taxon>Myxococcaceae</taxon>
        <taxon>Myxococcus</taxon>
    </lineage>
</organism>
<proteinExistence type="inferred from homology"/>
<feature type="chain" id="PRO_0000323900" description="Uridylate kinase">
    <location>
        <begin position="1"/>
        <end position="250"/>
    </location>
</feature>
<feature type="binding site" evidence="1">
    <location>
        <begin position="17"/>
        <end position="20"/>
    </location>
    <ligand>
        <name>ATP</name>
        <dbReference type="ChEBI" id="CHEBI:30616"/>
    </ligand>
</feature>
<feature type="binding site" evidence="1">
    <location>
        <position position="59"/>
    </location>
    <ligand>
        <name>UMP</name>
        <dbReference type="ChEBI" id="CHEBI:57865"/>
    </ligand>
</feature>
<feature type="binding site" evidence="1">
    <location>
        <position position="60"/>
    </location>
    <ligand>
        <name>ATP</name>
        <dbReference type="ChEBI" id="CHEBI:30616"/>
    </ligand>
</feature>
<feature type="binding site" evidence="1">
    <location>
        <position position="64"/>
    </location>
    <ligand>
        <name>ATP</name>
        <dbReference type="ChEBI" id="CHEBI:30616"/>
    </ligand>
</feature>
<feature type="binding site" evidence="1">
    <location>
        <position position="79"/>
    </location>
    <ligand>
        <name>UMP</name>
        <dbReference type="ChEBI" id="CHEBI:57865"/>
    </ligand>
</feature>
<feature type="binding site" evidence="1">
    <location>
        <begin position="140"/>
        <end position="147"/>
    </location>
    <ligand>
        <name>UMP</name>
        <dbReference type="ChEBI" id="CHEBI:57865"/>
    </ligand>
</feature>
<feature type="binding site" evidence="1">
    <location>
        <position position="167"/>
    </location>
    <ligand>
        <name>ATP</name>
        <dbReference type="ChEBI" id="CHEBI:30616"/>
    </ligand>
</feature>
<feature type="binding site" evidence="1">
    <location>
        <position position="173"/>
    </location>
    <ligand>
        <name>ATP</name>
        <dbReference type="ChEBI" id="CHEBI:30616"/>
    </ligand>
</feature>
<feature type="binding site" evidence="1">
    <location>
        <position position="176"/>
    </location>
    <ligand>
        <name>ATP</name>
        <dbReference type="ChEBI" id="CHEBI:30616"/>
    </ligand>
</feature>
<comment type="function">
    <text evidence="1">Catalyzes the reversible phosphorylation of UMP to UDP.</text>
</comment>
<comment type="catalytic activity">
    <reaction evidence="1">
        <text>UMP + ATP = UDP + ADP</text>
        <dbReference type="Rhea" id="RHEA:24400"/>
        <dbReference type="ChEBI" id="CHEBI:30616"/>
        <dbReference type="ChEBI" id="CHEBI:57865"/>
        <dbReference type="ChEBI" id="CHEBI:58223"/>
        <dbReference type="ChEBI" id="CHEBI:456216"/>
        <dbReference type="EC" id="2.7.4.22"/>
    </reaction>
</comment>
<comment type="activity regulation">
    <text evidence="1">Inhibited by UTP.</text>
</comment>
<comment type="pathway">
    <text evidence="1">Pyrimidine metabolism; CTP biosynthesis via de novo pathway; UDP from UMP (UMPK route): step 1/1.</text>
</comment>
<comment type="subunit">
    <text evidence="1">Homohexamer.</text>
</comment>
<comment type="subcellular location">
    <subcellularLocation>
        <location evidence="1">Cytoplasm</location>
    </subcellularLocation>
</comment>
<comment type="similarity">
    <text evidence="1">Belongs to the UMP kinase family.</text>
</comment>
<name>PYRH_MYXXD</name>
<keyword id="KW-0067">ATP-binding</keyword>
<keyword id="KW-0963">Cytoplasm</keyword>
<keyword id="KW-0418">Kinase</keyword>
<keyword id="KW-0547">Nucleotide-binding</keyword>
<keyword id="KW-0665">Pyrimidine biosynthesis</keyword>
<keyword id="KW-1185">Reference proteome</keyword>
<keyword id="KW-0808">Transferase</keyword>
<evidence type="ECO:0000255" key="1">
    <source>
        <dbReference type="HAMAP-Rule" id="MF_01220"/>
    </source>
</evidence>
<accession>Q1D1I1</accession>
<gene>
    <name evidence="1" type="primary">pyrH</name>
    <name type="ordered locus">MXAN_5342</name>
</gene>
<protein>
    <recommendedName>
        <fullName evidence="1">Uridylate kinase</fullName>
        <shortName evidence="1">UK</shortName>
        <ecNumber evidence="1">2.7.4.22</ecNumber>
    </recommendedName>
    <alternativeName>
        <fullName evidence="1">Uridine monophosphate kinase</fullName>
        <shortName evidence="1">UMP kinase</shortName>
        <shortName evidence="1">UMPK</shortName>
    </alternativeName>
</protein>
<reference key="1">
    <citation type="journal article" date="2006" name="Proc. Natl. Acad. Sci. U.S.A.">
        <title>Evolution of sensory complexity recorded in a myxobacterial genome.</title>
        <authorList>
            <person name="Goldman B.S."/>
            <person name="Nierman W.C."/>
            <person name="Kaiser D."/>
            <person name="Slater S.C."/>
            <person name="Durkin A.S."/>
            <person name="Eisen J.A."/>
            <person name="Ronning C.M."/>
            <person name="Barbazuk W.B."/>
            <person name="Blanchard M."/>
            <person name="Field C."/>
            <person name="Halling C."/>
            <person name="Hinkle G."/>
            <person name="Iartchuk O."/>
            <person name="Kim H.S."/>
            <person name="Mackenzie C."/>
            <person name="Madupu R."/>
            <person name="Miller N."/>
            <person name="Shvartsbeyn A."/>
            <person name="Sullivan S.A."/>
            <person name="Vaudin M."/>
            <person name="Wiegand R."/>
            <person name="Kaplan H.B."/>
        </authorList>
    </citation>
    <scope>NUCLEOTIDE SEQUENCE [LARGE SCALE GENOMIC DNA]</scope>
    <source>
        <strain>DK1622</strain>
    </source>
</reference>